<gene>
    <name evidence="1" type="primary">rplD</name>
    <name type="ordered locus">Sez_0057</name>
</gene>
<accession>B4U501</accession>
<organism>
    <name type="scientific">Streptococcus equi subsp. zooepidemicus (strain MGCS10565)</name>
    <dbReference type="NCBI Taxonomy" id="552526"/>
    <lineage>
        <taxon>Bacteria</taxon>
        <taxon>Bacillati</taxon>
        <taxon>Bacillota</taxon>
        <taxon>Bacilli</taxon>
        <taxon>Lactobacillales</taxon>
        <taxon>Streptococcaceae</taxon>
        <taxon>Streptococcus</taxon>
    </lineage>
</organism>
<dbReference type="EMBL" id="CP001129">
    <property type="protein sequence ID" value="ACG61440.1"/>
    <property type="molecule type" value="Genomic_DNA"/>
</dbReference>
<dbReference type="RefSeq" id="WP_012514733.1">
    <property type="nucleotide sequence ID" value="NC_011134.1"/>
</dbReference>
<dbReference type="SMR" id="B4U501"/>
<dbReference type="KEGG" id="sez:Sez_0057"/>
<dbReference type="HOGENOM" id="CLU_041575_5_2_9"/>
<dbReference type="Proteomes" id="UP000001873">
    <property type="component" value="Chromosome"/>
</dbReference>
<dbReference type="GO" id="GO:1990904">
    <property type="term" value="C:ribonucleoprotein complex"/>
    <property type="evidence" value="ECO:0007669"/>
    <property type="project" value="UniProtKB-KW"/>
</dbReference>
<dbReference type="GO" id="GO:0005840">
    <property type="term" value="C:ribosome"/>
    <property type="evidence" value="ECO:0007669"/>
    <property type="project" value="UniProtKB-KW"/>
</dbReference>
<dbReference type="GO" id="GO:0019843">
    <property type="term" value="F:rRNA binding"/>
    <property type="evidence" value="ECO:0007669"/>
    <property type="project" value="UniProtKB-UniRule"/>
</dbReference>
<dbReference type="GO" id="GO:0003735">
    <property type="term" value="F:structural constituent of ribosome"/>
    <property type="evidence" value="ECO:0007669"/>
    <property type="project" value="InterPro"/>
</dbReference>
<dbReference type="GO" id="GO:0006412">
    <property type="term" value="P:translation"/>
    <property type="evidence" value="ECO:0007669"/>
    <property type="project" value="UniProtKB-UniRule"/>
</dbReference>
<dbReference type="FunFam" id="3.40.1370.10:FF:000003">
    <property type="entry name" value="50S ribosomal protein L4"/>
    <property type="match status" value="1"/>
</dbReference>
<dbReference type="Gene3D" id="3.40.1370.10">
    <property type="match status" value="1"/>
</dbReference>
<dbReference type="HAMAP" id="MF_01328_B">
    <property type="entry name" value="Ribosomal_uL4_B"/>
    <property type="match status" value="1"/>
</dbReference>
<dbReference type="InterPro" id="IPR002136">
    <property type="entry name" value="Ribosomal_uL4"/>
</dbReference>
<dbReference type="InterPro" id="IPR013005">
    <property type="entry name" value="Ribosomal_uL4-like"/>
</dbReference>
<dbReference type="InterPro" id="IPR023574">
    <property type="entry name" value="Ribosomal_uL4_dom_sf"/>
</dbReference>
<dbReference type="NCBIfam" id="TIGR03953">
    <property type="entry name" value="rplD_bact"/>
    <property type="match status" value="1"/>
</dbReference>
<dbReference type="PANTHER" id="PTHR10746">
    <property type="entry name" value="50S RIBOSOMAL PROTEIN L4"/>
    <property type="match status" value="1"/>
</dbReference>
<dbReference type="PANTHER" id="PTHR10746:SF6">
    <property type="entry name" value="LARGE RIBOSOMAL SUBUNIT PROTEIN UL4M"/>
    <property type="match status" value="1"/>
</dbReference>
<dbReference type="Pfam" id="PF00573">
    <property type="entry name" value="Ribosomal_L4"/>
    <property type="match status" value="1"/>
</dbReference>
<dbReference type="SUPFAM" id="SSF52166">
    <property type="entry name" value="Ribosomal protein L4"/>
    <property type="match status" value="1"/>
</dbReference>
<keyword id="KW-0687">Ribonucleoprotein</keyword>
<keyword id="KW-0689">Ribosomal protein</keyword>
<keyword id="KW-0694">RNA-binding</keyword>
<keyword id="KW-0699">rRNA-binding</keyword>
<proteinExistence type="inferred from homology"/>
<evidence type="ECO:0000255" key="1">
    <source>
        <dbReference type="HAMAP-Rule" id="MF_01328"/>
    </source>
</evidence>
<evidence type="ECO:0000256" key="2">
    <source>
        <dbReference type="SAM" id="MobiDB-lite"/>
    </source>
</evidence>
<evidence type="ECO:0000305" key="3"/>
<name>RL4_STREM</name>
<reference key="1">
    <citation type="journal article" date="2008" name="PLoS ONE">
        <title>Genome sequence of a lancefield group C Streptococcus zooepidemicus strain causing epidemic nephritis: new information about an old disease.</title>
        <authorList>
            <person name="Beres S.B."/>
            <person name="Sesso R."/>
            <person name="Pinto S.W.L."/>
            <person name="Hoe N.P."/>
            <person name="Porcella S.F."/>
            <person name="Deleo F.R."/>
            <person name="Musser J.M."/>
        </authorList>
    </citation>
    <scope>NUCLEOTIDE SEQUENCE [LARGE SCALE GENOMIC DNA]</scope>
    <source>
        <strain>MGCS10565</strain>
    </source>
</reference>
<sequence>MANVKLFDQTGKEVSTVELNDAIFGIEPNESVVFDVVISQRASLRQGTHAVKNRSAVSGGGRKPWRQKGTGRARQGSIRSPQWRGGGVVFGPTPRSYGYKLPQKVRRLALKSVYSAKVAEDKFVAVESLSFAAPKTAEFAKVLSALSIDTKVLVLVEEGNEFAALSARNLPNVAVATAATASVLDIVSADKLLVTKEAISTIEEVLA</sequence>
<comment type="function">
    <text evidence="1">One of the primary rRNA binding proteins, this protein initially binds near the 5'-end of the 23S rRNA. It is important during the early stages of 50S assembly. It makes multiple contacts with different domains of the 23S rRNA in the assembled 50S subunit and ribosome.</text>
</comment>
<comment type="function">
    <text evidence="1">Forms part of the polypeptide exit tunnel.</text>
</comment>
<comment type="subunit">
    <text evidence="1">Part of the 50S ribosomal subunit.</text>
</comment>
<comment type="similarity">
    <text evidence="1">Belongs to the universal ribosomal protein uL4 family.</text>
</comment>
<protein>
    <recommendedName>
        <fullName evidence="1">Large ribosomal subunit protein uL4</fullName>
    </recommendedName>
    <alternativeName>
        <fullName evidence="3">50S ribosomal protein L4</fullName>
    </alternativeName>
</protein>
<feature type="chain" id="PRO_1000142189" description="Large ribosomal subunit protein uL4">
    <location>
        <begin position="1"/>
        <end position="207"/>
    </location>
</feature>
<feature type="region of interest" description="Disordered" evidence="2">
    <location>
        <begin position="49"/>
        <end position="78"/>
    </location>
</feature>